<name>MTNB_AJEDR</name>
<protein>
    <recommendedName>
        <fullName evidence="1">Methylthioribulose-1-phosphate dehydratase</fullName>
        <shortName evidence="1">MTRu-1-P dehydratase</shortName>
        <ecNumber evidence="1">4.2.1.109</ecNumber>
    </recommendedName>
</protein>
<proteinExistence type="inferred from homology"/>
<reference key="1">
    <citation type="journal article" date="2015" name="PLoS Genet.">
        <title>The dynamic genome and transcriptome of the human fungal pathogen Blastomyces and close relative Emmonsia.</title>
        <authorList>
            <person name="Munoz J.F."/>
            <person name="Gauthier G.M."/>
            <person name="Desjardins C.A."/>
            <person name="Gallo J.E."/>
            <person name="Holder J."/>
            <person name="Sullivan T.D."/>
            <person name="Marty A.J."/>
            <person name="Carmen J.C."/>
            <person name="Chen Z."/>
            <person name="Ding L."/>
            <person name="Gujja S."/>
            <person name="Magrini V."/>
            <person name="Misas E."/>
            <person name="Mitreva M."/>
            <person name="Priest M."/>
            <person name="Saif S."/>
            <person name="Whiston E.A."/>
            <person name="Young S."/>
            <person name="Zeng Q."/>
            <person name="Goldman W.E."/>
            <person name="Mardis E.R."/>
            <person name="Taylor J.W."/>
            <person name="McEwen J.G."/>
            <person name="Clay O.K."/>
            <person name="Klein B.S."/>
            <person name="Cuomo C.A."/>
        </authorList>
    </citation>
    <scope>NUCLEOTIDE SEQUENCE [LARGE SCALE GENOMIC DNA]</scope>
    <source>
        <strain>ER-3 / ATCC MYA-2586</strain>
    </source>
</reference>
<accession>C5GGA4</accession>
<keyword id="KW-0028">Amino-acid biosynthesis</keyword>
<keyword id="KW-0963">Cytoplasm</keyword>
<keyword id="KW-0456">Lyase</keyword>
<keyword id="KW-0479">Metal-binding</keyword>
<keyword id="KW-0486">Methionine biosynthesis</keyword>
<keyword id="KW-0862">Zinc</keyword>
<dbReference type="EC" id="4.2.1.109" evidence="1"/>
<dbReference type="EMBL" id="EQ999975">
    <property type="protein sequence ID" value="EEQ88190.1"/>
    <property type="molecule type" value="Genomic_DNA"/>
</dbReference>
<dbReference type="SMR" id="C5GGA4"/>
<dbReference type="STRING" id="559297.C5GGA4"/>
<dbReference type="VEuPathDB" id="FungiDB:BDCG_03310"/>
<dbReference type="eggNOG" id="KOG2631">
    <property type="taxonomic scope" value="Eukaryota"/>
</dbReference>
<dbReference type="HOGENOM" id="CLU_006033_4_0_1"/>
<dbReference type="OMA" id="WFPGTSG"/>
<dbReference type="UniPathway" id="UPA00904">
    <property type="reaction ID" value="UER00875"/>
</dbReference>
<dbReference type="GO" id="GO:0005737">
    <property type="term" value="C:cytoplasm"/>
    <property type="evidence" value="ECO:0007669"/>
    <property type="project" value="UniProtKB-SubCell"/>
</dbReference>
<dbReference type="GO" id="GO:0046570">
    <property type="term" value="F:methylthioribulose 1-phosphate dehydratase activity"/>
    <property type="evidence" value="ECO:0007669"/>
    <property type="project" value="UniProtKB-UniRule"/>
</dbReference>
<dbReference type="GO" id="GO:0008270">
    <property type="term" value="F:zinc ion binding"/>
    <property type="evidence" value="ECO:0007669"/>
    <property type="project" value="UniProtKB-UniRule"/>
</dbReference>
<dbReference type="GO" id="GO:0019509">
    <property type="term" value="P:L-methionine salvage from methylthioadenosine"/>
    <property type="evidence" value="ECO:0007669"/>
    <property type="project" value="UniProtKB-UniRule"/>
</dbReference>
<dbReference type="FunFam" id="3.40.225.10:FF:000003">
    <property type="entry name" value="Methylthioribulose-1-phosphate dehydratase"/>
    <property type="match status" value="1"/>
</dbReference>
<dbReference type="Gene3D" id="3.40.225.10">
    <property type="entry name" value="Class II aldolase/adducin N-terminal domain"/>
    <property type="match status" value="1"/>
</dbReference>
<dbReference type="HAMAP" id="MF_03116">
    <property type="entry name" value="Salvage_MtnB_euk"/>
    <property type="match status" value="1"/>
</dbReference>
<dbReference type="InterPro" id="IPR001303">
    <property type="entry name" value="Aldolase_II/adducin_N"/>
</dbReference>
<dbReference type="InterPro" id="IPR036409">
    <property type="entry name" value="Aldolase_II/adducin_N_sf"/>
</dbReference>
<dbReference type="InterPro" id="IPR017714">
    <property type="entry name" value="MethylthioRu-1-P_deHdtase_MtnB"/>
</dbReference>
<dbReference type="InterPro" id="IPR027514">
    <property type="entry name" value="Salvage_MtnB_euk"/>
</dbReference>
<dbReference type="NCBIfam" id="TIGR03328">
    <property type="entry name" value="salvage_mtnB"/>
    <property type="match status" value="1"/>
</dbReference>
<dbReference type="PANTHER" id="PTHR10640">
    <property type="entry name" value="METHYLTHIORIBULOSE-1-PHOSPHATE DEHYDRATASE"/>
    <property type="match status" value="1"/>
</dbReference>
<dbReference type="PANTHER" id="PTHR10640:SF7">
    <property type="entry name" value="METHYLTHIORIBULOSE-1-PHOSPHATE DEHYDRATASE"/>
    <property type="match status" value="1"/>
</dbReference>
<dbReference type="Pfam" id="PF00596">
    <property type="entry name" value="Aldolase_II"/>
    <property type="match status" value="1"/>
</dbReference>
<dbReference type="SMART" id="SM01007">
    <property type="entry name" value="Aldolase_II"/>
    <property type="match status" value="1"/>
</dbReference>
<dbReference type="SUPFAM" id="SSF53639">
    <property type="entry name" value="AraD/HMP-PK domain-like"/>
    <property type="match status" value="1"/>
</dbReference>
<comment type="function">
    <text evidence="1">Catalyzes the dehydration of methylthioribulose-1-phosphate (MTRu-1-P) into 2,3-diketo-5-methylthiopentyl-1-phosphate (DK-MTP-1-P).</text>
</comment>
<comment type="catalytic activity">
    <reaction evidence="1">
        <text>5-(methylsulfanyl)-D-ribulose 1-phosphate = 5-methylsulfanyl-2,3-dioxopentyl phosphate + H2O</text>
        <dbReference type="Rhea" id="RHEA:15549"/>
        <dbReference type="ChEBI" id="CHEBI:15377"/>
        <dbReference type="ChEBI" id="CHEBI:58548"/>
        <dbReference type="ChEBI" id="CHEBI:58828"/>
        <dbReference type="EC" id="4.2.1.109"/>
    </reaction>
</comment>
<comment type="cofactor">
    <cofactor evidence="1">
        <name>Zn(2+)</name>
        <dbReference type="ChEBI" id="CHEBI:29105"/>
    </cofactor>
    <text evidence="1">Binds 1 zinc ion per subunit.</text>
</comment>
<comment type="pathway">
    <text evidence="1">Amino-acid biosynthesis; L-methionine biosynthesis via salvage pathway; L-methionine from S-methyl-5-thio-alpha-D-ribose 1-phosphate: step 2/6.</text>
</comment>
<comment type="subcellular location">
    <subcellularLocation>
        <location evidence="1">Cytoplasm</location>
    </subcellularLocation>
</comment>
<comment type="similarity">
    <text evidence="1">Belongs to the aldolase class II family. MtnB subfamily.</text>
</comment>
<sequence length="241" mass="26944">MSAIKDESNNDHLVQSHDPEHPANLIPALCRNFYGHGWVTGTGGGASIKRDNHIFIAPSGVQKELIQPHNIFVLQYPTPKYPPSARQYIRKPLELKPSACTPLFLAAFDRGAGCCIHTHSQWAVLVTLLVEREKGLEGCFEISNIEQIKGIPKGKGKGMMGFFDTLKIPIIENTAFEEDLTSSLEEAMEKYPDTYAVLVRRHGIYVWGDDVAKAKTQCESLDYLFQLAVEMHKLGLPWVKP</sequence>
<organism>
    <name type="scientific">Ajellomyces dermatitidis (strain ER-3 / ATCC MYA-2586)</name>
    <name type="common">Blastomyces dermatitidis</name>
    <dbReference type="NCBI Taxonomy" id="559297"/>
    <lineage>
        <taxon>Eukaryota</taxon>
        <taxon>Fungi</taxon>
        <taxon>Dikarya</taxon>
        <taxon>Ascomycota</taxon>
        <taxon>Pezizomycotina</taxon>
        <taxon>Eurotiomycetes</taxon>
        <taxon>Eurotiomycetidae</taxon>
        <taxon>Onygenales</taxon>
        <taxon>Ajellomycetaceae</taxon>
        <taxon>Blastomyces</taxon>
    </lineage>
</organism>
<feature type="chain" id="PRO_0000393802" description="Methylthioribulose-1-phosphate dehydratase">
    <location>
        <begin position="1"/>
        <end position="241"/>
    </location>
</feature>
<feature type="active site" description="Proton donor/acceptor" evidence="1">
    <location>
        <position position="146"/>
    </location>
</feature>
<feature type="binding site" evidence="1">
    <location>
        <position position="100"/>
    </location>
    <ligand>
        <name>substrate</name>
    </ligand>
</feature>
<feature type="binding site" evidence="1">
    <location>
        <position position="117"/>
    </location>
    <ligand>
        <name>Zn(2+)</name>
        <dbReference type="ChEBI" id="CHEBI:29105"/>
    </ligand>
</feature>
<feature type="binding site" evidence="1">
    <location>
        <position position="119"/>
    </location>
    <ligand>
        <name>Zn(2+)</name>
        <dbReference type="ChEBI" id="CHEBI:29105"/>
    </ligand>
</feature>
<feature type="binding site" evidence="1">
    <location>
        <position position="202"/>
    </location>
    <ligand>
        <name>Zn(2+)</name>
        <dbReference type="ChEBI" id="CHEBI:29105"/>
    </ligand>
</feature>
<evidence type="ECO:0000255" key="1">
    <source>
        <dbReference type="HAMAP-Rule" id="MF_03116"/>
    </source>
</evidence>
<gene>
    <name evidence="1" type="primary">MDE1</name>
    <name type="ORF">BDCG_03310</name>
</gene>